<proteinExistence type="evidence at transcript level"/>
<organism>
    <name type="scientific">Escherichia coli O7:K1 (strain IAI39 / ExPEC)</name>
    <dbReference type="NCBI Taxonomy" id="585057"/>
    <lineage>
        <taxon>Bacteria</taxon>
        <taxon>Pseudomonadati</taxon>
        <taxon>Pseudomonadota</taxon>
        <taxon>Gammaproteobacteria</taxon>
        <taxon>Enterobacterales</taxon>
        <taxon>Enterobacteriaceae</taxon>
        <taxon>Escherichia</taxon>
    </lineage>
</organism>
<dbReference type="EMBL" id="CU928164">
    <property type="protein sequence ID" value="CAR17075.1"/>
    <property type="molecule type" value="Genomic_DNA"/>
</dbReference>
<dbReference type="RefSeq" id="WP_000667608.1">
    <property type="nucleotide sequence ID" value="NC_011750.1"/>
</dbReference>
<dbReference type="RefSeq" id="YP_002406960.1">
    <property type="nucleotide sequence ID" value="NC_011750.1"/>
</dbReference>
<dbReference type="SMR" id="B7NQB0"/>
<dbReference type="STRING" id="585057.ECIAI39_0938"/>
<dbReference type="KEGG" id="ect:ECIAI39_0938"/>
<dbReference type="PATRIC" id="fig|585057.6.peg.988"/>
<dbReference type="HOGENOM" id="CLU_002755_1_2_6"/>
<dbReference type="Proteomes" id="UP000000749">
    <property type="component" value="Chromosome"/>
</dbReference>
<dbReference type="GO" id="GO:0005886">
    <property type="term" value="C:plasma membrane"/>
    <property type="evidence" value="ECO:0007669"/>
    <property type="project" value="UniProtKB-SubCell"/>
</dbReference>
<dbReference type="GO" id="GO:0042910">
    <property type="term" value="F:xenobiotic transmembrane transporter activity"/>
    <property type="evidence" value="ECO:0007669"/>
    <property type="project" value="TreeGrafter"/>
</dbReference>
<dbReference type="FunFam" id="1.20.1640.10:FF:000001">
    <property type="entry name" value="Efflux pump membrane transporter"/>
    <property type="match status" value="1"/>
</dbReference>
<dbReference type="FunFam" id="3.30.70.1430:FF:000001">
    <property type="entry name" value="Efflux pump membrane transporter"/>
    <property type="match status" value="1"/>
</dbReference>
<dbReference type="FunFam" id="3.30.2090.10:FF:000004">
    <property type="entry name" value="Multidrug resistance protein MdtC"/>
    <property type="match status" value="1"/>
</dbReference>
<dbReference type="FunFam" id="3.30.2090.10:FF:000005">
    <property type="entry name" value="Multidrug resistance protein MdtC"/>
    <property type="match status" value="1"/>
</dbReference>
<dbReference type="FunFam" id="3.30.70.1430:FF:000004">
    <property type="entry name" value="Multidrug resistance protein MdtC"/>
    <property type="match status" value="1"/>
</dbReference>
<dbReference type="Gene3D" id="3.30.70.1430">
    <property type="entry name" value="Multidrug efflux transporter AcrB pore domain"/>
    <property type="match status" value="2"/>
</dbReference>
<dbReference type="Gene3D" id="3.30.70.1440">
    <property type="entry name" value="Multidrug efflux transporter AcrB pore domain"/>
    <property type="match status" value="1"/>
</dbReference>
<dbReference type="Gene3D" id="3.30.70.1320">
    <property type="entry name" value="Multidrug efflux transporter AcrB pore domain like"/>
    <property type="match status" value="1"/>
</dbReference>
<dbReference type="Gene3D" id="3.30.2090.10">
    <property type="entry name" value="Multidrug efflux transporter AcrB TolC docking domain, DN and DC subdomains"/>
    <property type="match status" value="2"/>
</dbReference>
<dbReference type="Gene3D" id="1.20.1640.10">
    <property type="entry name" value="Multidrug efflux transporter AcrB transmembrane domain"/>
    <property type="match status" value="2"/>
</dbReference>
<dbReference type="HAMAP" id="MF_01424">
    <property type="entry name" value="MdtC"/>
    <property type="match status" value="1"/>
</dbReference>
<dbReference type="InterPro" id="IPR027463">
    <property type="entry name" value="AcrB_DN_DC_subdom"/>
</dbReference>
<dbReference type="InterPro" id="IPR001036">
    <property type="entry name" value="Acrflvin-R"/>
</dbReference>
<dbReference type="InterPro" id="IPR023931">
    <property type="entry name" value="Multidrug-R_MdtC"/>
</dbReference>
<dbReference type="NCBIfam" id="NF007905">
    <property type="entry name" value="PRK10614.1"/>
    <property type="match status" value="1"/>
</dbReference>
<dbReference type="NCBIfam" id="NF033617">
    <property type="entry name" value="RND_permease_2"/>
    <property type="match status" value="1"/>
</dbReference>
<dbReference type="PANTHER" id="PTHR32063">
    <property type="match status" value="1"/>
</dbReference>
<dbReference type="PANTHER" id="PTHR32063:SF34">
    <property type="entry name" value="MULTIDRUG RESISTANCE PROTEIN MDTC"/>
    <property type="match status" value="1"/>
</dbReference>
<dbReference type="Pfam" id="PF00873">
    <property type="entry name" value="ACR_tran"/>
    <property type="match status" value="1"/>
</dbReference>
<dbReference type="PRINTS" id="PR00702">
    <property type="entry name" value="ACRIFLAVINRP"/>
</dbReference>
<dbReference type="SUPFAM" id="SSF82693">
    <property type="entry name" value="Multidrug efflux transporter AcrB pore domain, PN1, PN2, PC1 and PC2 subdomains"/>
    <property type="match status" value="4"/>
</dbReference>
<dbReference type="SUPFAM" id="SSF82714">
    <property type="entry name" value="Multidrug efflux transporter AcrB TolC docking domain, DN and DC subdomains"/>
    <property type="match status" value="2"/>
</dbReference>
<dbReference type="SUPFAM" id="SSF82866">
    <property type="entry name" value="Multidrug efflux transporter AcrB transmembrane domain"/>
    <property type="match status" value="2"/>
</dbReference>
<sequence>MKFFALFIYRPVATILLSVAITLCGILGFRMLPVAPLPQVDFPVIMVSASLPSASPETMASSVATPLERSLGRIAGVSEMTSSSSLGSTRIILQFDFDRDINGAARDVQAAINAAQSLLPSGMPSRPTYRKANPSDAPIMILTLTSDTYSQGELYDFASTQLAPTISQIDGVGDVDVGGSSLPAVRVGLNPQALFNQGVSLDDVRTAISNANVRKPQGALEDGTHRWQIQTNDELKTAAEYQPLIIHYNNGGAVRLGDVATVTDSVQDVRNAGMTNAKPAILLMIRKLPEANIIQTVDSIRARLPELQSTIPAAIDLQIAQDRSPTIRASLEEVEQTLIISVALVILVVFLFLRSGRATIIPAVAVPVSLIGTFAAMYLCGFSLNNLSLMALTIATGFVVDDAIVVLENIARHLEAGMKPLQAALQGTREVGFTVLSMSLSLVAVFLPLLLMGGLPGRLLREFAVTLSVAIGISLLVSLTLTPMMCGWMLKASKPREQKRLRGFGRVLVALQQGYGKSLKWVLNHTRLVGVVLLGTIALNIWLYISIPKTFFPEQDTGVLMGGIQADQSISFQAMRGKLQDFMKIIRDDPAVDNVTGFTGGSRVNSGMMFITLKPRDERSETAQQIIDRLRVKLAKEPGANLFLMAVQDIRVGGRQANASYQYTLLSDDLPALREWEPKIRKKLATLPELADVNSDQQDNGAEMNLVYDRDTMARLGIDVQAANSLLNNAFGQRQISTIYQPMNQYKVVMEVDPRYTQDISALEKMFVINNEGKAIPLSYFAKWQPANAPLSVNHQGLSAASTISFNLPTGKSLSDASAAIDRAMTQLGVPSTVRGSFAGTAQVFQETMNSQVILIIAAIATVYIVLGILYESYVHPLTILSTLPSAGVGALLALELFNAPFSLIALIGIMLLIGIVKKNAIMMVDFALEAQRHGNLTPQEAIFQACLLRFRPIMMTTLAALFGALPLVLSGGDGSELRQPLGITIVGGLVMSQLLTLYTTPVVYLFFDRLRLRFSRKPKQAVTE</sequence>
<evidence type="ECO:0000255" key="1">
    <source>
        <dbReference type="HAMAP-Rule" id="MF_01424"/>
    </source>
</evidence>
<keyword id="KW-0997">Cell inner membrane</keyword>
<keyword id="KW-1003">Cell membrane</keyword>
<keyword id="KW-0472">Membrane</keyword>
<keyword id="KW-0812">Transmembrane</keyword>
<keyword id="KW-1133">Transmembrane helix</keyword>
<keyword id="KW-0813">Transport</keyword>
<name>MDTC_ECO7I</name>
<protein>
    <recommendedName>
        <fullName evidence="1">Multidrug resistance protein MdtC</fullName>
    </recommendedName>
    <alternativeName>
        <fullName evidence="1">Multidrug transporter MdtC</fullName>
    </alternativeName>
</protein>
<gene>
    <name evidence="1" type="primary">mdtC</name>
    <name type="ordered locus">ECIAI39_0938</name>
</gene>
<reference key="1">
    <citation type="journal article" date="2009" name="PLoS Genet.">
        <title>Organised genome dynamics in the Escherichia coli species results in highly diverse adaptive paths.</title>
        <authorList>
            <person name="Touchon M."/>
            <person name="Hoede C."/>
            <person name="Tenaillon O."/>
            <person name="Barbe V."/>
            <person name="Baeriswyl S."/>
            <person name="Bidet P."/>
            <person name="Bingen E."/>
            <person name="Bonacorsi S."/>
            <person name="Bouchier C."/>
            <person name="Bouvet O."/>
            <person name="Calteau A."/>
            <person name="Chiapello H."/>
            <person name="Clermont O."/>
            <person name="Cruveiller S."/>
            <person name="Danchin A."/>
            <person name="Diard M."/>
            <person name="Dossat C."/>
            <person name="Karoui M.E."/>
            <person name="Frapy E."/>
            <person name="Garry L."/>
            <person name="Ghigo J.M."/>
            <person name="Gilles A.M."/>
            <person name="Johnson J."/>
            <person name="Le Bouguenec C."/>
            <person name="Lescat M."/>
            <person name="Mangenot S."/>
            <person name="Martinez-Jehanne V."/>
            <person name="Matic I."/>
            <person name="Nassif X."/>
            <person name="Oztas S."/>
            <person name="Petit M.A."/>
            <person name="Pichon C."/>
            <person name="Rouy Z."/>
            <person name="Ruf C.S."/>
            <person name="Schneider D."/>
            <person name="Tourret J."/>
            <person name="Vacherie B."/>
            <person name="Vallenet D."/>
            <person name="Medigue C."/>
            <person name="Rocha E.P.C."/>
            <person name="Denamur E."/>
        </authorList>
    </citation>
    <scope>NUCLEOTIDE SEQUENCE [LARGE SCALE GENOMIC DNA]</scope>
    <source>
        <strain>IAI39 / ExPEC</strain>
    </source>
</reference>
<comment type="function">
    <text evidence="1">The MdtABC tripartite complex confers resistance against novobiocin and deoxycholate.</text>
</comment>
<comment type="subunit">
    <text evidence="1">Part of a tripartite efflux system composed of MdtA, MdtB and MdtC. MdtC forms a heteromultimer with MdtB.</text>
</comment>
<comment type="subcellular location">
    <subcellularLocation>
        <location evidence="1">Cell inner membrane</location>
        <topology evidence="1">Multi-pass membrane protein</topology>
    </subcellularLocation>
</comment>
<comment type="induction">
    <text>The mdtABC operon is transcriptionally activated by BaeR.</text>
</comment>
<comment type="similarity">
    <text evidence="1">Belongs to the resistance-nodulation-cell division (RND) (TC 2.A.6) family. MdtC subfamily.</text>
</comment>
<accession>B7NQB0</accession>
<feature type="chain" id="PRO_1000145668" description="Multidrug resistance protein MdtC">
    <location>
        <begin position="1"/>
        <end position="1025"/>
    </location>
</feature>
<feature type="transmembrane region" description="Helical" evidence="1">
    <location>
        <begin position="3"/>
        <end position="23"/>
    </location>
</feature>
<feature type="transmembrane region" description="Helical" evidence="1">
    <location>
        <begin position="333"/>
        <end position="353"/>
    </location>
</feature>
<feature type="transmembrane region" description="Helical" evidence="1">
    <location>
        <begin position="360"/>
        <end position="380"/>
    </location>
</feature>
<feature type="transmembrane region" description="Helical" evidence="1">
    <location>
        <begin position="387"/>
        <end position="407"/>
    </location>
</feature>
<feature type="transmembrane region" description="Helical" evidence="1">
    <location>
        <begin position="431"/>
        <end position="451"/>
    </location>
</feature>
<feature type="transmembrane region" description="Helical" evidence="1">
    <location>
        <begin position="463"/>
        <end position="483"/>
    </location>
</feature>
<feature type="transmembrane region" description="Helical" evidence="1">
    <location>
        <begin position="528"/>
        <end position="548"/>
    </location>
</feature>
<feature type="transmembrane region" description="Helical" evidence="1">
    <location>
        <begin position="853"/>
        <end position="873"/>
    </location>
</feature>
<feature type="transmembrane region" description="Helical" evidence="1">
    <location>
        <begin position="875"/>
        <end position="895"/>
    </location>
</feature>
<feature type="transmembrane region" description="Helical" evidence="1">
    <location>
        <begin position="897"/>
        <end position="917"/>
    </location>
</feature>
<feature type="transmembrane region" description="Helical" evidence="1">
    <location>
        <begin position="953"/>
        <end position="973"/>
    </location>
</feature>
<feature type="transmembrane region" description="Helical" evidence="1">
    <location>
        <begin position="984"/>
        <end position="1004"/>
    </location>
</feature>